<organism>
    <name type="scientific">Cupriavidus metallidurans (strain ATCC 43123 / DSM 2839 / NBRC 102507 / CH34)</name>
    <name type="common">Ralstonia metallidurans</name>
    <dbReference type="NCBI Taxonomy" id="266264"/>
    <lineage>
        <taxon>Bacteria</taxon>
        <taxon>Pseudomonadati</taxon>
        <taxon>Pseudomonadota</taxon>
        <taxon>Betaproteobacteria</taxon>
        <taxon>Burkholderiales</taxon>
        <taxon>Burkholderiaceae</taxon>
        <taxon>Cupriavidus</taxon>
    </lineage>
</organism>
<reference key="1">
    <citation type="journal article" date="1989" name="Proc. Natl. Acad. Sci. U.S.A.">
        <title>Expression and nucleotide sequence of a plasmid-determined divalent cation efflux system from Alcaligenes eutrophus.</title>
        <authorList>
            <person name="Nies D.H."/>
            <person name="Nies A."/>
            <person name="Chu L."/>
            <person name="Silver S."/>
        </authorList>
    </citation>
    <scope>PRELIMINARY NUCLEOTIDE SEQUENCE [GENOMIC DNA]</scope>
</reference>
<reference key="2">
    <citation type="submission" date="2004-11" db="EMBL/GenBank/DDBJ databases">
        <title>Sequence and features of the Ralstonia metallidurans CH34 heavy metals plasmids pMOL28 and pMOL30.</title>
        <authorList>
            <person name="Monchy S."/>
            <person name="van der Lelie D."/>
            <person name="Vallaeys T."/>
            <person name="Taghavi S."/>
            <person name="Benotmane M."/>
            <person name="McCorkle S."/>
            <person name="Dunn J."/>
            <person name="Lapidus A."/>
            <person name="Mergeay M."/>
        </authorList>
    </citation>
    <scope>NUCLEOTIDE SEQUENCE [LARGE SCALE GENOMIC DNA]</scope>
</reference>
<reference key="3">
    <citation type="journal article" date="2010" name="PLoS ONE">
        <title>The complete genome sequence of Cupriavidus metallidurans strain CH34, a master survivalist in harsh and anthropogenic environments.</title>
        <authorList>
            <person name="Janssen P.J."/>
            <person name="Van Houdt R."/>
            <person name="Moors H."/>
            <person name="Monsieurs P."/>
            <person name="Morin N."/>
            <person name="Michaux A."/>
            <person name="Benotmane M.A."/>
            <person name="Leys N."/>
            <person name="Vallaeys T."/>
            <person name="Lapidus A."/>
            <person name="Monchy S."/>
            <person name="Medigue C."/>
            <person name="Taghavi S."/>
            <person name="McCorkle S."/>
            <person name="Dunn J."/>
            <person name="van der Lelie D."/>
            <person name="Mergeay M."/>
        </authorList>
    </citation>
    <scope>NUCLEOTIDE SEQUENCE [LARGE SCALE GENOMIC DNA]</scope>
    <source>
        <strain>ATCC 43123 / DSM 2839 / NBRC 102507 / CH34</strain>
    </source>
</reference>
<reference key="4">
    <citation type="journal article" date="1995" name="J. Ind. Microbiol.">
        <title>The czc operon of Alcaligenes eutrophus CH34: from resistance mechanism to the removal of heavy metals.</title>
        <authorList>
            <person name="Diels L."/>
            <person name="Dong Q."/>
            <person name="van der Lelie D."/>
            <person name="Baeyens W."/>
            <person name="Mergeay M."/>
        </authorList>
    </citation>
    <scope>NUCLEOTIDE SEQUENCE [GENOMIC DNA] OF 1-86</scope>
    <scope>CHARACTERIZATION</scope>
    <scope>INDUCTION</scope>
    <scope>DISCUSSION OF FUNCTION</scope>
</reference>
<comment type="function">
    <text>CzcC protein appears to modify the specificity of the system, perhaps by acting on the CzcB protein. When the CzcC protein is added to CzcA and CzcB, the efflux system gains specificity for cadmium and cobalt.</text>
</comment>
<comment type="subcellular location">
    <subcellularLocation>
        <location evidence="3">Cell outer membrane</location>
    </subcellularLocation>
</comment>
<comment type="induction">
    <text evidence="2">By zinc, cadmium and cobalt (zinc being the best and cobalt being the worst inducer).</text>
</comment>
<comment type="biotechnology">
    <text evidence="2">In the presence of 2 mM Cd(2+) or 4-10 mM Zn(2+) up to 99% of the metal is removed from the culture supernatant and is sequestered via bioprecipitation. Additionally Cu(2+), Co(2+), Ni(2+), Pb(2+), Y(3+) and Ge(4+) can also be removed from culture supernatants, although it is not clear which efflux system is responsible for all these substrates (PubMed:7766206).</text>
</comment>
<comment type="similarity">
    <text evidence="3">Belongs to the outer membrane factor (OMF) (TC 1.B.17) family.</text>
</comment>
<comment type="sequence caution" evidence="3">
    <conflict type="erroneous initiation">
        <sequence resource="EMBL-CDS" id="CAA50525"/>
    </conflict>
</comment>
<accession>P13509</accession>
<accession>P94141</accession>
<accession>Q1LAI5</accession>
<accession>Q44010</accession>
<geneLocation type="plasmid">
    <name>pMOL30</name>
</geneLocation>
<feature type="signal peptide" evidence="1">
    <location>
        <begin position="1"/>
        <end position="22"/>
    </location>
</feature>
<feature type="chain" id="PRO_0000021056" description="Cobalt-zinc-cadmium resistance protein CzcC">
    <location>
        <begin position="23"/>
        <end position="418"/>
    </location>
</feature>
<feature type="sequence conflict" description="In Ref. 1." evidence="3" ref="1">
    <original>ELGGKRSARINAAER</original>
    <variation>RLAASARLVSMPRKG</variation>
    <location>
        <begin position="106"/>
        <end position="120"/>
    </location>
</feature>
<feature type="sequence conflict" description="In Ref. 1; CAA67082." evidence="3" ref="1">
    <location>
        <position position="174"/>
    </location>
</feature>
<proteinExistence type="evidence at protein level"/>
<dbReference type="EMBL" id="X98451">
    <property type="protein sequence ID" value="CAA67082.1"/>
    <property type="molecule type" value="Genomic_DNA"/>
</dbReference>
<dbReference type="EMBL" id="CP000354">
    <property type="protein sequence ID" value="ABF12841.1"/>
    <property type="molecule type" value="Genomic_DNA"/>
</dbReference>
<dbReference type="EMBL" id="X71400">
    <property type="protein sequence ID" value="CAA50525.2"/>
    <property type="status" value="ALT_INIT"/>
    <property type="molecule type" value="Genomic_DNA"/>
</dbReference>
<dbReference type="RefSeq" id="WP_011514819.1">
    <property type="nucleotide sequence ID" value="NC_006466.1"/>
</dbReference>
<dbReference type="RefSeq" id="YP_145593.1">
    <property type="nucleotide sequence ID" value="NC_006466.1"/>
</dbReference>
<dbReference type="SMR" id="P13509"/>
<dbReference type="TCDB" id="1.B.17.2.2">
    <property type="family name" value="the outer membrane factor (omf) family"/>
</dbReference>
<dbReference type="KEGG" id="rme:Rmet_5982"/>
<dbReference type="HOGENOM" id="CLU_012817_14_3_4"/>
<dbReference type="Proteomes" id="UP000002429">
    <property type="component" value="Plasmid pMOL30"/>
</dbReference>
<dbReference type="GO" id="GO:0009279">
    <property type="term" value="C:cell outer membrane"/>
    <property type="evidence" value="ECO:0007669"/>
    <property type="project" value="UniProtKB-SubCell"/>
</dbReference>
<dbReference type="GO" id="GO:0015562">
    <property type="term" value="F:efflux transmembrane transporter activity"/>
    <property type="evidence" value="ECO:0007669"/>
    <property type="project" value="InterPro"/>
</dbReference>
<dbReference type="GO" id="GO:0046686">
    <property type="term" value="P:response to cadmium ion"/>
    <property type="evidence" value="ECO:0007669"/>
    <property type="project" value="UniProtKB-KW"/>
</dbReference>
<dbReference type="Gene3D" id="1.20.1600.10">
    <property type="entry name" value="Outer membrane efflux proteins (OEP)"/>
    <property type="match status" value="1"/>
</dbReference>
<dbReference type="InterPro" id="IPR050737">
    <property type="entry name" value="OMF"/>
</dbReference>
<dbReference type="InterPro" id="IPR003423">
    <property type="entry name" value="OMP_efflux"/>
</dbReference>
<dbReference type="PANTHER" id="PTHR30203:SF24">
    <property type="entry name" value="BLR4935 PROTEIN"/>
    <property type="match status" value="1"/>
</dbReference>
<dbReference type="PANTHER" id="PTHR30203">
    <property type="entry name" value="OUTER MEMBRANE CATION EFFLUX PROTEIN"/>
    <property type="match status" value="1"/>
</dbReference>
<dbReference type="Pfam" id="PF02321">
    <property type="entry name" value="OEP"/>
    <property type="match status" value="2"/>
</dbReference>
<dbReference type="SUPFAM" id="SSF56954">
    <property type="entry name" value="Outer membrane efflux proteins (OEP)"/>
    <property type="match status" value="1"/>
</dbReference>
<name>CZCC_CUPMC</name>
<evidence type="ECO:0000255" key="1"/>
<evidence type="ECO:0000269" key="2">
    <source>
    </source>
</evidence>
<evidence type="ECO:0000305" key="3"/>
<keyword id="KW-0105">Cadmium resistance</keyword>
<keyword id="KW-0998">Cell outer membrane</keyword>
<keyword id="KW-0170">Cobalt</keyword>
<keyword id="KW-0472">Membrane</keyword>
<keyword id="KW-0614">Plasmid</keyword>
<keyword id="KW-1185">Reference proteome</keyword>
<keyword id="KW-0732">Signal</keyword>
<keyword id="KW-0812">Transmembrane</keyword>
<keyword id="KW-1134">Transmembrane beta strand</keyword>
<keyword id="KW-0813">Transport</keyword>
<keyword id="KW-0862">Zinc</keyword>
<sequence length="418" mass="44807">MRRLFLPLGLAVAFLSPNFAVAQSDTGTSMVPVFPREAAGPLTLEAALSLAAGSNFNLSAAAKELDSTEGGIMQARVIPNPELKTLVEDTRKSTRTSTAQMNIPIELGGKRSARINAAERTRELAQATLAGVRGDIRAQVIESFFSVLIAQERVKLATGSADIAARGAQAASRRVAAGKISPVDETKARVEQANAELELAEATASLQSARQALTALWGNASPQFAEAQGNLDALPSRPAPELLQKELENSPLVAASRAELDRRQALVGVERSRQYPDLTVSLGAKRDTEANRNMAVIGVAIPLPIFDRNQGNLYSAIRQADKAQDEYLANRISLTRNLLMASNQLSVSRASAQTLKQTVLPGAEQAFNAATIGFEAGKFNYLDVLDAQRTLFQARIRYLGVLGQTYQAATTIDRILGR</sequence>
<gene>
    <name type="primary">czcC</name>
    <name type="ordered locus">Rmet_5982</name>
</gene>
<protein>
    <recommendedName>
        <fullName>Cobalt-zinc-cadmium resistance protein CzcC</fullName>
    </recommendedName>
    <alternativeName>
        <fullName>Cation efflux system protein CzcC</fullName>
    </alternativeName>
</protein>